<evidence type="ECO:0000303" key="1">
    <source>
    </source>
</evidence>
<reference key="1">
    <citation type="journal article" date="2008" name="J. Proteomics">
        <title>A proteomics approach to identify proteins differentially expressed in Douglas-fir seedlings infected by Phellinus sulphurascens.</title>
        <authorList>
            <person name="Islam M.A."/>
            <person name="Sturrock R.N."/>
            <person name="Ekramoddoullah A.K.M."/>
        </authorList>
    </citation>
    <scope>IDENTIFICATION BY MASS SPECTROMETRY</scope>
</reference>
<proteinExistence type="evidence at protein level"/>
<name>UP06_PSEMZ</name>
<feature type="chain" id="PRO_0000347293" description="Unknown protein 6">
    <location>
        <begin position="1" status="less than"/>
        <end position="17" status="greater than"/>
    </location>
</feature>
<feature type="non-terminal residue" evidence="1">
    <location>
        <position position="1"/>
    </location>
</feature>
<feature type="non-terminal residue" evidence="1">
    <location>
        <position position="17"/>
    </location>
</feature>
<sequence>NEVDIVGALNADLTQFL</sequence>
<organism>
    <name type="scientific">Pseudotsuga menziesii</name>
    <name type="common">Douglas-fir</name>
    <name type="synonym">Abies menziesii</name>
    <dbReference type="NCBI Taxonomy" id="3357"/>
    <lineage>
        <taxon>Eukaryota</taxon>
        <taxon>Viridiplantae</taxon>
        <taxon>Streptophyta</taxon>
        <taxon>Embryophyta</taxon>
        <taxon>Tracheophyta</taxon>
        <taxon>Spermatophyta</taxon>
        <taxon>Pinopsida</taxon>
        <taxon>Pinidae</taxon>
        <taxon>Conifers I</taxon>
        <taxon>Pinales</taxon>
        <taxon>Pinaceae</taxon>
        <taxon>Pseudotsuga</taxon>
    </lineage>
</organism>
<protein>
    <recommendedName>
        <fullName>Unknown protein 6</fullName>
    </recommendedName>
</protein>
<accession>P85963</accession>